<comment type="function">
    <text evidence="1">RuBisCO catalyzes two reactions: the carboxylation of D-ribulose 1,5-bisphosphate, the primary event in carbon dioxide fixation, as well as the oxidative fragmentation of the pentose substrate in the photorespiration process. Both reactions occur simultaneously and in competition at the same active site.</text>
</comment>
<comment type="catalytic activity">
    <reaction evidence="1">
        <text>2 (2R)-3-phosphoglycerate + 2 H(+) = D-ribulose 1,5-bisphosphate + CO2 + H2O</text>
        <dbReference type="Rhea" id="RHEA:23124"/>
        <dbReference type="ChEBI" id="CHEBI:15377"/>
        <dbReference type="ChEBI" id="CHEBI:15378"/>
        <dbReference type="ChEBI" id="CHEBI:16526"/>
        <dbReference type="ChEBI" id="CHEBI:57870"/>
        <dbReference type="ChEBI" id="CHEBI:58272"/>
        <dbReference type="EC" id="4.1.1.39"/>
    </reaction>
</comment>
<comment type="catalytic activity">
    <reaction evidence="1">
        <text>D-ribulose 1,5-bisphosphate + O2 = 2-phosphoglycolate + (2R)-3-phosphoglycerate + 2 H(+)</text>
        <dbReference type="Rhea" id="RHEA:36631"/>
        <dbReference type="ChEBI" id="CHEBI:15378"/>
        <dbReference type="ChEBI" id="CHEBI:15379"/>
        <dbReference type="ChEBI" id="CHEBI:57870"/>
        <dbReference type="ChEBI" id="CHEBI:58033"/>
        <dbReference type="ChEBI" id="CHEBI:58272"/>
    </reaction>
</comment>
<comment type="cofactor">
    <cofactor evidence="1">
        <name>Mg(2+)</name>
        <dbReference type="ChEBI" id="CHEBI:18420"/>
    </cofactor>
    <text evidence="1">Binds 1 Mg(2+) ion per subunit.</text>
</comment>
<comment type="subunit">
    <text evidence="1">Heterohexadecamer of 8 large chains and 8 small chains; disulfide-linked. The disulfide link is formed within the large subunit homodimers.</text>
</comment>
<comment type="subcellular location">
    <subcellularLocation>
        <location>Plastid</location>
        <location>Chloroplast</location>
    </subcellularLocation>
</comment>
<comment type="PTM">
    <text evidence="1">The disulfide bond which can form in the large chain dimeric partners within the hexadecamer appears to be associated with oxidative stress and protein turnover.</text>
</comment>
<comment type="miscellaneous">
    <text evidence="1">The basic functional RuBisCO is composed of a large chain homodimer in a 'head-to-tail' conformation. In form I RuBisCO this homodimer is arranged in a barrel-like tetramer with the small subunits forming a tetrameric 'cap' on each end of the 'barrel'.</text>
</comment>
<comment type="similarity">
    <text evidence="1">Belongs to the RuBisCO large chain family. Type I subfamily.</text>
</comment>
<keyword id="KW-0113">Calvin cycle</keyword>
<keyword id="KW-0120">Carbon dioxide fixation</keyword>
<keyword id="KW-0150">Chloroplast</keyword>
<keyword id="KW-1015">Disulfide bond</keyword>
<keyword id="KW-0456">Lyase</keyword>
<keyword id="KW-0460">Magnesium</keyword>
<keyword id="KW-0479">Metal-binding</keyword>
<keyword id="KW-0503">Monooxygenase</keyword>
<keyword id="KW-0560">Oxidoreductase</keyword>
<keyword id="KW-0601">Photorespiration</keyword>
<keyword id="KW-0602">Photosynthesis</keyword>
<keyword id="KW-0934">Plastid</keyword>
<reference key="1">
    <citation type="journal article" date="1985" name="J. Biol. Chem.">
        <title>The Euglena gracilis chloroplast ribulose-1,5-bisphosphate carboxylase gene. I. Complete DNA sequence and analysis of the nine intervening sequences.</title>
        <authorList>
            <person name="Gingrich J.C."/>
            <person name="Hallick R.B."/>
        </authorList>
    </citation>
    <scope>NUCLEOTIDE SEQUENCE [GENOMIC DNA]</scope>
</reference>
<reference key="2">
    <citation type="journal article" date="1985" name="J. Biol. Chem.">
        <title>The Euglena gracilis chloroplast ribulose-1,5-bisphosphate carboxylase gene. II. The spliced mRNA and its product.</title>
        <authorList>
            <person name="Gingrich J.C."/>
            <person name="Hallick R.B."/>
        </authorList>
    </citation>
    <scope>NUCLEOTIDE SEQUENCE [GENOMIC DNA]</scope>
</reference>
<reference key="3">
    <citation type="journal article" date="1993" name="Nucleic Acids Res.">
        <title>Complete sequence of Euglena gracilis chloroplast DNA.</title>
        <authorList>
            <person name="Hallick R.B."/>
            <person name="Hong L."/>
            <person name="Drager R.G."/>
            <person name="Favreau M.R."/>
            <person name="Monfort A."/>
            <person name="Orsat B."/>
            <person name="Spielmann A."/>
            <person name="Stutz E."/>
        </authorList>
    </citation>
    <scope>NUCLEOTIDE SEQUENCE [LARGE SCALE GENOMIC DNA]</scope>
    <source>
        <strain>Z / UTEX 753</strain>
    </source>
</reference>
<reference key="4">
    <citation type="journal article" date="1984" name="Cell">
        <title>Nine introns with conserved boundary sequences in the Euglena gracilis chloroplast ribulose-1,5-bisphosphate carboxylase gene.</title>
        <authorList>
            <person name="Koller B."/>
            <person name="Gingrich J.C."/>
            <person name="Stiegler G.L."/>
            <person name="Farley M.A."/>
            <person name="Delius H."/>
            <person name="Hallick R.B."/>
        </authorList>
    </citation>
    <scope>NUCLEOTIDE SEQUENCE [GENOMIC DNA] OF 84-204</scope>
</reference>
<reference key="5">
    <citation type="journal article" date="1995" name="Nucleic Acids Res.">
        <title>Evidence for the late origin of introns in chloroplast genes from an evolutionary analysis of the genus Euglena.</title>
        <authorList>
            <person name="Thompson M.D."/>
            <person name="Copertino D.W."/>
            <person name="Thompson E."/>
            <person name="Favreau M.R."/>
            <person name="Hallick R.B."/>
        </authorList>
    </citation>
    <scope>NUCLEOTIDE SEQUENCE [MRNA] OF 20-455</scope>
    <source>
        <strain>UTEX 364</strain>
    </source>
</reference>
<reference key="6">
    <citation type="journal article" date="1996" name="Nucleic Acids Res.">
        <authorList>
            <person name="Thompson M.D."/>
            <person name="Copertino D.W."/>
            <person name="Thompson E."/>
            <person name="Favreau M.R."/>
            <person name="Hallick R.B."/>
        </authorList>
    </citation>
    <scope>ERRATUM OF PUBMED:8532514</scope>
    <scope>SHOWS THAT UTEX 364 IS FROM E.GRACILIS AND NOT E.MUTABILIS</scope>
</reference>
<protein>
    <recommendedName>
        <fullName evidence="1">Ribulose bisphosphate carboxylase large chain</fullName>
        <shortName evidence="1">RuBisCO large subunit</shortName>
        <ecNumber evidence="1">4.1.1.39</ecNumber>
    </recommendedName>
</protein>
<evidence type="ECO:0000255" key="1">
    <source>
        <dbReference type="HAMAP-Rule" id="MF_01338"/>
    </source>
</evidence>
<evidence type="ECO:0000305" key="2"/>
<sequence length="475" mass="52609">MSPQTETKTGAGFKAGVKDYRLTYYTPDYQVSETDILAAFRMTPQPGVPAEECGAAVAAESSTGTWTTVWTDGLTQLDRYKGRCYDLEPVPGESNQYIAYVAYPIDLFEEGSVTNLLTSIVGNVFGFKALRALRLEDLRIPPAYSKTFWGPPHGIQVERDRLNKYGRPLLGCTIKPKLGLSAKNYGRAVYECLRGGLDFTKDDENVNSQSFMRWRDRFLFCAEAIYKAQTETGEVKGHYLNATAGTCEEMYKRASFAAQIGVPIIMHDYLTGGFTANTSLAMYCRDNGLLLHIHRAMHAVIDRQRNHGIHFRVLAKTLRMSGGDHLHSGTVVGKLEGEREVTLGFVDLMRDAYVEKDRSRGIYFTQDWCGMGGTMPVASGGIHVWHMPALTEIFGDDACLQFGGGTLGHPWGNAPGAAANRVASEACVQARNEGRDLSREGGDVIREACKWSPELAAACEVWKEIKFEFETIDKL</sequence>
<dbReference type="EC" id="4.1.1.39" evidence="1"/>
<dbReference type="EMBL" id="M15391">
    <property type="protein sequence ID" value="AAA84221.1"/>
    <property type="molecule type" value="Genomic_DNA"/>
</dbReference>
<dbReference type="EMBL" id="M12109">
    <property type="protein sequence ID" value="AAA84453.1"/>
    <property type="molecule type" value="Genomic_DNA"/>
</dbReference>
<dbReference type="EMBL" id="X70810">
    <property type="protein sequence ID" value="CAA50123.1"/>
    <property type="molecule type" value="Genomic_DNA"/>
</dbReference>
<dbReference type="EMBL" id="U21006">
    <property type="protein sequence ID" value="AAA91979.1"/>
    <property type="molecule type" value="mRNA"/>
</dbReference>
<dbReference type="PIR" id="A24556">
    <property type="entry name" value="RKEGL"/>
</dbReference>
<dbReference type="PIR" id="S66168">
    <property type="entry name" value="S66168"/>
</dbReference>
<dbReference type="RefSeq" id="NP_041936.1">
    <property type="nucleotide sequence ID" value="NC_001603.2"/>
</dbReference>
<dbReference type="SMR" id="P00878"/>
<dbReference type="GeneID" id="807506"/>
<dbReference type="SABIO-RK" id="P00878"/>
<dbReference type="GO" id="GO:0009507">
    <property type="term" value="C:chloroplast"/>
    <property type="evidence" value="ECO:0007669"/>
    <property type="project" value="UniProtKB-SubCell"/>
</dbReference>
<dbReference type="GO" id="GO:0000287">
    <property type="term" value="F:magnesium ion binding"/>
    <property type="evidence" value="ECO:0007669"/>
    <property type="project" value="UniProtKB-UniRule"/>
</dbReference>
<dbReference type="GO" id="GO:0004497">
    <property type="term" value="F:monooxygenase activity"/>
    <property type="evidence" value="ECO:0007669"/>
    <property type="project" value="UniProtKB-KW"/>
</dbReference>
<dbReference type="GO" id="GO:0016984">
    <property type="term" value="F:ribulose-bisphosphate carboxylase activity"/>
    <property type="evidence" value="ECO:0007669"/>
    <property type="project" value="UniProtKB-UniRule"/>
</dbReference>
<dbReference type="GO" id="GO:0009853">
    <property type="term" value="P:photorespiration"/>
    <property type="evidence" value="ECO:0007669"/>
    <property type="project" value="UniProtKB-KW"/>
</dbReference>
<dbReference type="GO" id="GO:0019253">
    <property type="term" value="P:reductive pentose-phosphate cycle"/>
    <property type="evidence" value="ECO:0007669"/>
    <property type="project" value="UniProtKB-UniRule"/>
</dbReference>
<dbReference type="CDD" id="cd08212">
    <property type="entry name" value="RuBisCO_large_I"/>
    <property type="match status" value="1"/>
</dbReference>
<dbReference type="Gene3D" id="3.20.20.110">
    <property type="entry name" value="Ribulose bisphosphate carboxylase, large subunit, C-terminal domain"/>
    <property type="match status" value="1"/>
</dbReference>
<dbReference type="Gene3D" id="3.30.70.150">
    <property type="entry name" value="RuBisCO large subunit, N-terminal domain"/>
    <property type="match status" value="1"/>
</dbReference>
<dbReference type="HAMAP" id="MF_01338">
    <property type="entry name" value="RuBisCO_L_type1"/>
    <property type="match status" value="1"/>
</dbReference>
<dbReference type="InterPro" id="IPR033966">
    <property type="entry name" value="RuBisCO"/>
</dbReference>
<dbReference type="InterPro" id="IPR020878">
    <property type="entry name" value="RuBisCo_large_chain_AS"/>
</dbReference>
<dbReference type="InterPro" id="IPR000685">
    <property type="entry name" value="RuBisCO_lsu_C"/>
</dbReference>
<dbReference type="InterPro" id="IPR036376">
    <property type="entry name" value="RuBisCO_lsu_C_sf"/>
</dbReference>
<dbReference type="InterPro" id="IPR017443">
    <property type="entry name" value="RuBisCO_lsu_fd_N"/>
</dbReference>
<dbReference type="InterPro" id="IPR036422">
    <property type="entry name" value="RuBisCO_lsu_N_sf"/>
</dbReference>
<dbReference type="InterPro" id="IPR020888">
    <property type="entry name" value="RuBisCO_lsuI"/>
</dbReference>
<dbReference type="NCBIfam" id="NF003252">
    <property type="entry name" value="PRK04208.1"/>
    <property type="match status" value="1"/>
</dbReference>
<dbReference type="PANTHER" id="PTHR42704">
    <property type="entry name" value="RIBULOSE BISPHOSPHATE CARBOXYLASE"/>
    <property type="match status" value="1"/>
</dbReference>
<dbReference type="PANTHER" id="PTHR42704:SF17">
    <property type="entry name" value="RIBULOSE BISPHOSPHATE CARBOXYLASE LARGE CHAIN"/>
    <property type="match status" value="1"/>
</dbReference>
<dbReference type="Pfam" id="PF00016">
    <property type="entry name" value="RuBisCO_large"/>
    <property type="match status" value="1"/>
</dbReference>
<dbReference type="Pfam" id="PF02788">
    <property type="entry name" value="RuBisCO_large_N"/>
    <property type="match status" value="1"/>
</dbReference>
<dbReference type="SFLD" id="SFLDG01052">
    <property type="entry name" value="RuBisCO"/>
    <property type="match status" value="1"/>
</dbReference>
<dbReference type="SFLD" id="SFLDS00014">
    <property type="entry name" value="RuBisCO"/>
    <property type="match status" value="1"/>
</dbReference>
<dbReference type="SFLD" id="SFLDG00301">
    <property type="entry name" value="RuBisCO-like_proteins"/>
    <property type="match status" value="1"/>
</dbReference>
<dbReference type="SUPFAM" id="SSF51649">
    <property type="entry name" value="RuBisCo, C-terminal domain"/>
    <property type="match status" value="1"/>
</dbReference>
<dbReference type="SUPFAM" id="SSF54966">
    <property type="entry name" value="RuBisCO, large subunit, small (N-terminal) domain"/>
    <property type="match status" value="1"/>
</dbReference>
<dbReference type="PROSITE" id="PS00157">
    <property type="entry name" value="RUBISCO_LARGE"/>
    <property type="match status" value="1"/>
</dbReference>
<geneLocation type="chloroplast"/>
<gene>
    <name evidence="1" type="primary">rbcL</name>
</gene>
<proteinExistence type="evidence at transcript level"/>
<organism>
    <name type="scientific">Euglena gracilis</name>
    <dbReference type="NCBI Taxonomy" id="3039"/>
    <lineage>
        <taxon>Eukaryota</taxon>
        <taxon>Discoba</taxon>
        <taxon>Euglenozoa</taxon>
        <taxon>Euglenida</taxon>
        <taxon>Spirocuta</taxon>
        <taxon>Euglenophyceae</taxon>
        <taxon>Euglenales</taxon>
        <taxon>Euglenaceae</taxon>
        <taxon>Euglena</taxon>
    </lineage>
</organism>
<name>RBL_EUGGR</name>
<feature type="chain" id="PRO_0000062467" description="Ribulose bisphosphate carboxylase large chain">
    <location>
        <begin position="1"/>
        <end position="475"/>
    </location>
</feature>
<feature type="active site" description="Proton acceptor" evidence="1">
    <location>
        <position position="175"/>
    </location>
</feature>
<feature type="active site" description="Proton acceptor" evidence="1">
    <location>
        <position position="294"/>
    </location>
</feature>
<feature type="binding site" description="in homodimeric partner" evidence="1">
    <location>
        <position position="123"/>
    </location>
    <ligand>
        <name>substrate</name>
    </ligand>
</feature>
<feature type="binding site" evidence="1">
    <location>
        <position position="173"/>
    </location>
    <ligand>
        <name>substrate</name>
    </ligand>
</feature>
<feature type="binding site" evidence="1">
    <location>
        <position position="177"/>
    </location>
    <ligand>
        <name>substrate</name>
    </ligand>
</feature>
<feature type="binding site" description="via carbamate group" evidence="1">
    <location>
        <position position="201"/>
    </location>
    <ligand>
        <name>Mg(2+)</name>
        <dbReference type="ChEBI" id="CHEBI:18420"/>
    </ligand>
</feature>
<feature type="binding site" evidence="1">
    <location>
        <position position="203"/>
    </location>
    <ligand>
        <name>Mg(2+)</name>
        <dbReference type="ChEBI" id="CHEBI:18420"/>
    </ligand>
</feature>
<feature type="binding site" evidence="1">
    <location>
        <position position="204"/>
    </location>
    <ligand>
        <name>Mg(2+)</name>
        <dbReference type="ChEBI" id="CHEBI:18420"/>
    </ligand>
</feature>
<feature type="binding site" evidence="1">
    <location>
        <position position="295"/>
    </location>
    <ligand>
        <name>substrate</name>
    </ligand>
</feature>
<feature type="binding site" evidence="1">
    <location>
        <position position="327"/>
    </location>
    <ligand>
        <name>substrate</name>
    </ligand>
</feature>
<feature type="binding site" evidence="1">
    <location>
        <position position="379"/>
    </location>
    <ligand>
        <name>substrate</name>
    </ligand>
</feature>
<feature type="site" description="Transition state stabilizer" evidence="1">
    <location>
        <position position="334"/>
    </location>
</feature>
<feature type="modified residue" description="N6-carboxylysine" evidence="1">
    <location>
        <position position="201"/>
    </location>
</feature>
<feature type="disulfide bond" description="Interchain; in linked form" evidence="1">
    <location>
        <position position="247"/>
    </location>
</feature>
<feature type="sequence conflict" description="In Ref. 4; AAA84221." evidence="2" ref="4">
    <original>YPIDL</original>
    <variation>SLLIF</variation>
    <location>
        <begin position="103"/>
        <end position="107"/>
    </location>
</feature>
<feature type="sequence conflict" description="In Ref. 5; AAA91979." evidence="2" ref="5">
    <original>F</original>
    <variation>S</variation>
    <location>
        <position position="108"/>
    </location>
</feature>
<accession>P00878</accession>
<accession>P48071</accession>